<sequence>MSVPLILTLLAGAATFIGAFLGVLGQKPSNRVLAFSLGFAAGIMLLISLMEMLPAALDTEGMSPVLGYGMFIIGLLGYFGLDRLLPHAHPQDLVPKRQQPIPGSIKRTAVLLTLGISLHNFPEGIATFVTASSNLELGFGIALAVALHNIPEGLAVAGPVYAATGSKRTAIFWAGISGMAEIFGGVLAWLILGSLVSPIVMAAIMAAVAGIMVALSVDELMPLAKEIDPNNNPSYGVLCGMSVMGLSLVILQTIGIG</sequence>
<name>ZUPT_SALAR</name>
<protein>
    <recommendedName>
        <fullName evidence="1">Zinc transporter ZupT</fullName>
    </recommendedName>
</protein>
<comment type="function">
    <text evidence="1">Mediates zinc uptake. May also transport other divalent cations.</text>
</comment>
<comment type="catalytic activity">
    <reaction evidence="1">
        <text>Zn(2+)(in) = Zn(2+)(out)</text>
        <dbReference type="Rhea" id="RHEA:29351"/>
        <dbReference type="ChEBI" id="CHEBI:29105"/>
    </reaction>
</comment>
<comment type="subcellular location">
    <subcellularLocation>
        <location evidence="1">Cell inner membrane</location>
        <topology evidence="1">Multi-pass membrane protein</topology>
    </subcellularLocation>
</comment>
<comment type="similarity">
    <text evidence="1">Belongs to the ZIP transporter (TC 2.A.5) family. ZupT subfamily.</text>
</comment>
<organism>
    <name type="scientific">Salmonella arizonae (strain ATCC BAA-731 / CDC346-86 / RSK2980)</name>
    <dbReference type="NCBI Taxonomy" id="41514"/>
    <lineage>
        <taxon>Bacteria</taxon>
        <taxon>Pseudomonadati</taxon>
        <taxon>Pseudomonadota</taxon>
        <taxon>Gammaproteobacteria</taxon>
        <taxon>Enterobacterales</taxon>
        <taxon>Enterobacteriaceae</taxon>
        <taxon>Salmonella</taxon>
    </lineage>
</organism>
<accession>A9MPX1</accession>
<evidence type="ECO:0000255" key="1">
    <source>
        <dbReference type="HAMAP-Rule" id="MF_00548"/>
    </source>
</evidence>
<reference key="1">
    <citation type="submission" date="2007-11" db="EMBL/GenBank/DDBJ databases">
        <authorList>
            <consortium name="The Salmonella enterica serovar Arizonae Genome Sequencing Project"/>
            <person name="McClelland M."/>
            <person name="Sanderson E.K."/>
            <person name="Porwollik S."/>
            <person name="Spieth J."/>
            <person name="Clifton W.S."/>
            <person name="Fulton R."/>
            <person name="Chunyan W."/>
            <person name="Wollam A."/>
            <person name="Shah N."/>
            <person name="Pepin K."/>
            <person name="Bhonagiri V."/>
            <person name="Nash W."/>
            <person name="Johnson M."/>
            <person name="Thiruvilangam P."/>
            <person name="Wilson R."/>
        </authorList>
    </citation>
    <scope>NUCLEOTIDE SEQUENCE [LARGE SCALE GENOMIC DNA]</scope>
    <source>
        <strain>ATCC BAA-731 / CDC346-86 / RSK2980</strain>
    </source>
</reference>
<gene>
    <name evidence="1" type="primary">zupT</name>
    <name type="ordered locus">SARI_04438</name>
</gene>
<keyword id="KW-0997">Cell inner membrane</keyword>
<keyword id="KW-1003">Cell membrane</keyword>
<keyword id="KW-0406">Ion transport</keyword>
<keyword id="KW-0408">Iron</keyword>
<keyword id="KW-0472">Membrane</keyword>
<keyword id="KW-0479">Metal-binding</keyword>
<keyword id="KW-1185">Reference proteome</keyword>
<keyword id="KW-0812">Transmembrane</keyword>
<keyword id="KW-1133">Transmembrane helix</keyword>
<keyword id="KW-0813">Transport</keyword>
<keyword id="KW-0862">Zinc</keyword>
<keyword id="KW-0864">Zinc transport</keyword>
<proteinExistence type="inferred from homology"/>
<dbReference type="EMBL" id="CP000880">
    <property type="protein sequence ID" value="ABX24214.1"/>
    <property type="molecule type" value="Genomic_DNA"/>
</dbReference>
<dbReference type="SMR" id="A9MPX1"/>
<dbReference type="STRING" id="41514.SARI_04438"/>
<dbReference type="KEGG" id="ses:SARI_04438"/>
<dbReference type="HOGENOM" id="CLU_015114_1_3_6"/>
<dbReference type="Proteomes" id="UP000002084">
    <property type="component" value="Chromosome"/>
</dbReference>
<dbReference type="GO" id="GO:0005886">
    <property type="term" value="C:plasma membrane"/>
    <property type="evidence" value="ECO:0007669"/>
    <property type="project" value="UniProtKB-SubCell"/>
</dbReference>
<dbReference type="GO" id="GO:0046872">
    <property type="term" value="F:metal ion binding"/>
    <property type="evidence" value="ECO:0007669"/>
    <property type="project" value="UniProtKB-KW"/>
</dbReference>
<dbReference type="GO" id="GO:0005385">
    <property type="term" value="F:zinc ion transmembrane transporter activity"/>
    <property type="evidence" value="ECO:0007669"/>
    <property type="project" value="UniProtKB-UniRule"/>
</dbReference>
<dbReference type="HAMAP" id="MF_00548">
    <property type="entry name" value="ZupT"/>
    <property type="match status" value="1"/>
</dbReference>
<dbReference type="InterPro" id="IPR003689">
    <property type="entry name" value="ZIP"/>
</dbReference>
<dbReference type="InterPro" id="IPR023498">
    <property type="entry name" value="Zn_transptr_ZupT"/>
</dbReference>
<dbReference type="NCBIfam" id="NF003243">
    <property type="entry name" value="PRK04201.1"/>
    <property type="match status" value="1"/>
</dbReference>
<dbReference type="PANTHER" id="PTHR11040:SF205">
    <property type="entry name" value="ZINC TRANSPORTER ZUPT"/>
    <property type="match status" value="1"/>
</dbReference>
<dbReference type="PANTHER" id="PTHR11040">
    <property type="entry name" value="ZINC/IRON TRANSPORTER"/>
    <property type="match status" value="1"/>
</dbReference>
<dbReference type="Pfam" id="PF02535">
    <property type="entry name" value="Zip"/>
    <property type="match status" value="2"/>
</dbReference>
<feature type="chain" id="PRO_1000081947" description="Zinc transporter ZupT">
    <location>
        <begin position="1"/>
        <end position="257"/>
    </location>
</feature>
<feature type="transmembrane region" description="Helical" evidence="1">
    <location>
        <begin position="5"/>
        <end position="25"/>
    </location>
</feature>
<feature type="transmembrane region" description="Helical" evidence="1">
    <location>
        <begin position="32"/>
        <end position="52"/>
    </location>
</feature>
<feature type="transmembrane region" description="Helical" evidence="1">
    <location>
        <begin position="61"/>
        <end position="81"/>
    </location>
</feature>
<feature type="transmembrane region" description="Helical" evidence="1">
    <location>
        <begin position="182"/>
        <end position="202"/>
    </location>
</feature>
<feature type="transmembrane region" description="Helical" evidence="1">
    <location>
        <begin position="203"/>
        <end position="223"/>
    </location>
</feature>
<feature type="transmembrane region" description="Helical" evidence="1">
    <location>
        <begin position="236"/>
        <end position="256"/>
    </location>
</feature>
<feature type="binding site" description="M2 metal binding site" evidence="1">
    <location>
        <position position="120"/>
    </location>
    <ligand>
        <name>Fe(2+)</name>
        <dbReference type="ChEBI" id="CHEBI:29033"/>
    </ligand>
</feature>
<feature type="binding site" description="M2 metal binding site" evidence="1">
    <location>
        <position position="123"/>
    </location>
    <ligand>
        <name>Fe(2+)</name>
        <dbReference type="ChEBI" id="CHEBI:29033"/>
    </ligand>
</feature>
<feature type="binding site" description="M1 metal binding site" evidence="1">
    <location>
        <position position="123"/>
    </location>
    <ligand>
        <name>Zn(2+)</name>
        <dbReference type="ChEBI" id="CHEBI:29105"/>
    </ligand>
</feature>
<feature type="binding site" description="M1 metal binding site" evidence="1">
    <location>
        <position position="148"/>
    </location>
    <ligand>
        <name>Zn(2+)</name>
        <dbReference type="ChEBI" id="CHEBI:29105"/>
    </ligand>
</feature>
<feature type="binding site" description="M2 metal binding site" evidence="1">
    <location>
        <position position="149"/>
    </location>
    <ligand>
        <name>Fe(2+)</name>
        <dbReference type="ChEBI" id="CHEBI:29033"/>
    </ligand>
</feature>
<feature type="binding site" description="M2 metal binding site" evidence="1">
    <location>
        <position position="152"/>
    </location>
    <ligand>
        <name>Fe(2+)</name>
        <dbReference type="ChEBI" id="CHEBI:29033"/>
    </ligand>
</feature>
<feature type="binding site" description="M1 metal binding site" evidence="1">
    <location>
        <position position="152"/>
    </location>
    <ligand>
        <name>Zn(2+)</name>
        <dbReference type="ChEBI" id="CHEBI:29105"/>
    </ligand>
</feature>
<feature type="binding site" description="M2 metal binding site" evidence="1">
    <location>
        <position position="181"/>
    </location>
    <ligand>
        <name>Fe(2+)</name>
        <dbReference type="ChEBI" id="CHEBI:29033"/>
    </ligand>
</feature>